<organism>
    <name type="scientific">Xanthomonas axonopodis pv. citri (strain 306)</name>
    <dbReference type="NCBI Taxonomy" id="190486"/>
    <lineage>
        <taxon>Bacteria</taxon>
        <taxon>Pseudomonadati</taxon>
        <taxon>Pseudomonadota</taxon>
        <taxon>Gammaproteobacteria</taxon>
        <taxon>Lysobacterales</taxon>
        <taxon>Lysobacteraceae</taxon>
        <taxon>Xanthomonas</taxon>
    </lineage>
</organism>
<sequence>MRGVSVCFTRTQLMRMFPAVLSCALTLLAGLAQAQQPMPATPSAQAGSQMQAATPSQVPVAFAAAPLPGGSTRAATLRELGIDYEITLRGVQGSAGVPFSVRSDEIVTAATLNLKYSYSPSLLPDLSHLKVTINGVTVATLPTDKANAGKLLSADLPIDPRLVTDYNQLNLQLIGHYTRDCEDPDHSSLWANVDAATSLSLTTTPLALANNLALLPVPFFDMRDTRRLELPFYFPQRPDTATLQAAGTVASWFGSLAGYRGAVFPASTEALPASGNAVVFATPGTLPAQFATADSGVADIRGPTVAVLANPNDRNGKLLLVLGRNSEDLQRAATALALRAPLTGAVARIGDISAPAPRRPYDAPSWVSSERPVRFGDLVTQPSQLNVAGYHPDLIRIGLQLPPDLFVWKRDGIPVALNYRYTLPEQDNKSALNVSINESFLTTLPLTGRPFAQSTPMRWWNSLGTRGSMPVHQDLTLPVGAFSANSQLRFHFFFDRPQGEACKNTFPDVSGAIDADSTIDLSGFHHYMAMPNLAAFANAGYPFTRLADLSESTIVLPDNPGDQDLSNVLTLLGHFGASTGYPALHAQIIGAGAVQQHAGRDLLLLGSAESQPLFKQWRAHLPIGQDGQATRFALTDWLFERLPRFLSFDARRTDLPTTAEIALQPQPDDVLLMGFESPLKSGRSVVAFQTEDPANMSRLFDAWFDPTLLKDFQGSVVLLQQNNVTSLVGNQTYYVGHLPLPTWLRWYFSHHPVWLAFTVVLLALLLALAARVLLRRRTAERLNDGGGA</sequence>
<dbReference type="EMBL" id="AE008923">
    <property type="protein sequence ID" value="AAM38360.1"/>
    <property type="status" value="ALT_INIT"/>
    <property type="molecule type" value="Genomic_DNA"/>
</dbReference>
<dbReference type="SMR" id="P58933"/>
<dbReference type="KEGG" id="xac:XAC3517"/>
<dbReference type="eggNOG" id="COG1215">
    <property type="taxonomic scope" value="Bacteria"/>
</dbReference>
<dbReference type="HOGENOM" id="CLU_003556_1_1_6"/>
<dbReference type="UniPathway" id="UPA00694"/>
<dbReference type="Proteomes" id="UP000000576">
    <property type="component" value="Chromosome"/>
</dbReference>
<dbReference type="GO" id="GO:0005886">
    <property type="term" value="C:plasma membrane"/>
    <property type="evidence" value="ECO:0007669"/>
    <property type="project" value="UniProtKB-SubCell"/>
</dbReference>
<dbReference type="GO" id="GO:0030244">
    <property type="term" value="P:cellulose biosynthetic process"/>
    <property type="evidence" value="ECO:0007669"/>
    <property type="project" value="UniProtKB-KW"/>
</dbReference>
<dbReference type="GO" id="GO:0006011">
    <property type="term" value="P:UDP-alpha-D-glucose metabolic process"/>
    <property type="evidence" value="ECO:0007669"/>
    <property type="project" value="InterPro"/>
</dbReference>
<dbReference type="Gene3D" id="2.60.120.260">
    <property type="entry name" value="Galactose-binding domain-like"/>
    <property type="match status" value="2"/>
</dbReference>
<dbReference type="InterPro" id="IPR003920">
    <property type="entry name" value="Cell_synth_B"/>
</dbReference>
<dbReference type="InterPro" id="IPR018513">
    <property type="entry name" value="Cell_synthase_bac"/>
</dbReference>
<dbReference type="NCBIfam" id="NF008323">
    <property type="entry name" value="PRK11114.1-1"/>
    <property type="match status" value="1"/>
</dbReference>
<dbReference type="NCBIfam" id="NF008328">
    <property type="entry name" value="PRK11114.2-2"/>
    <property type="match status" value="1"/>
</dbReference>
<dbReference type="PANTHER" id="PTHR39083">
    <property type="entry name" value="CYCLIC DI-GMP-BINDING PROTEIN"/>
    <property type="match status" value="1"/>
</dbReference>
<dbReference type="PANTHER" id="PTHR39083:SF1">
    <property type="entry name" value="CYCLIC DI-GMP-BINDING PROTEIN"/>
    <property type="match status" value="1"/>
</dbReference>
<dbReference type="Pfam" id="PF03170">
    <property type="entry name" value="BcsB"/>
    <property type="match status" value="1"/>
</dbReference>
<dbReference type="PRINTS" id="PR01440">
    <property type="entry name" value="CELLSNTHASEB"/>
</dbReference>
<keyword id="KW-0973">c-di-GMP</keyword>
<keyword id="KW-0997">Cell inner membrane</keyword>
<keyword id="KW-1003">Cell membrane</keyword>
<keyword id="KW-0135">Cellulose biosynthesis</keyword>
<keyword id="KW-0472">Membrane</keyword>
<keyword id="KW-0732">Signal</keyword>
<keyword id="KW-0812">Transmembrane</keyword>
<keyword id="KW-1133">Transmembrane helix</keyword>
<evidence type="ECO:0000250" key="1"/>
<evidence type="ECO:0000255" key="2"/>
<evidence type="ECO:0000305" key="3"/>
<feature type="signal peptide" evidence="2">
    <location>
        <begin position="1"/>
        <end position="34"/>
    </location>
</feature>
<feature type="chain" id="PRO_0000000272" description="Cyclic di-GMP-binding protein">
    <location>
        <begin position="35"/>
        <end position="788"/>
    </location>
</feature>
<feature type="topological domain" description="Periplasmic" evidence="2">
    <location>
        <begin position="35"/>
        <end position="752"/>
    </location>
</feature>
<feature type="transmembrane region" description="Helical" evidence="2">
    <location>
        <begin position="753"/>
        <end position="773"/>
    </location>
</feature>
<feature type="topological domain" description="Cytoplasmic" evidence="2">
    <location>
        <begin position="774"/>
        <end position="788"/>
    </location>
</feature>
<protein>
    <recommendedName>
        <fullName>Cyclic di-GMP-binding protein</fullName>
    </recommendedName>
    <alternativeName>
        <fullName>Cellulose synthase regulatory subunit</fullName>
    </alternativeName>
</protein>
<name>BCSB_XANAC</name>
<accession>P58933</accession>
<gene>
    <name type="primary">bcsB</name>
    <name type="ordered locus">XAC3517</name>
</gene>
<comment type="function">
    <text evidence="1">Binds the cellulose synthase activator, bis-(3'-5') cyclic diguanylic acid (c-di-GMP).</text>
</comment>
<comment type="pathway">
    <text>Glycan metabolism; bacterial cellulose biosynthesis.</text>
</comment>
<comment type="subunit">
    <text evidence="1">Tightly associated with the cellulose synthase catalytic subunit.</text>
</comment>
<comment type="subcellular location">
    <subcellularLocation>
        <location evidence="1">Cell inner membrane</location>
        <topology evidence="1">Single-pass type I membrane protein</topology>
    </subcellularLocation>
</comment>
<comment type="similarity">
    <text evidence="3">Belongs to the AcsB/BcsB family.</text>
</comment>
<comment type="sequence caution" evidence="3">
    <conflict type="erroneous initiation">
        <sequence resource="EMBL-CDS" id="AAM38360"/>
    </conflict>
</comment>
<reference key="1">
    <citation type="journal article" date="2002" name="Nature">
        <title>Comparison of the genomes of two Xanthomonas pathogens with differing host specificities.</title>
        <authorList>
            <person name="da Silva A.C.R."/>
            <person name="Ferro J.A."/>
            <person name="Reinach F.C."/>
            <person name="Farah C.S."/>
            <person name="Furlan L.R."/>
            <person name="Quaggio R.B."/>
            <person name="Monteiro-Vitorello C.B."/>
            <person name="Van Sluys M.A."/>
            <person name="Almeida N.F. Jr."/>
            <person name="Alves L.M.C."/>
            <person name="do Amaral A.M."/>
            <person name="Bertolini M.C."/>
            <person name="Camargo L.E.A."/>
            <person name="Camarotte G."/>
            <person name="Cannavan F."/>
            <person name="Cardozo J."/>
            <person name="Chambergo F."/>
            <person name="Ciapina L.P."/>
            <person name="Cicarelli R.M.B."/>
            <person name="Coutinho L.L."/>
            <person name="Cursino-Santos J.R."/>
            <person name="El-Dorry H."/>
            <person name="Faria J.B."/>
            <person name="Ferreira A.J.S."/>
            <person name="Ferreira R.C.C."/>
            <person name="Ferro M.I.T."/>
            <person name="Formighieri E.F."/>
            <person name="Franco M.C."/>
            <person name="Greggio C.C."/>
            <person name="Gruber A."/>
            <person name="Katsuyama A.M."/>
            <person name="Kishi L.T."/>
            <person name="Leite R.P."/>
            <person name="Lemos E.G.M."/>
            <person name="Lemos M.V.F."/>
            <person name="Locali E.C."/>
            <person name="Machado M.A."/>
            <person name="Madeira A.M.B.N."/>
            <person name="Martinez-Rossi N.M."/>
            <person name="Martins E.C."/>
            <person name="Meidanis J."/>
            <person name="Menck C.F.M."/>
            <person name="Miyaki C.Y."/>
            <person name="Moon D.H."/>
            <person name="Moreira L.M."/>
            <person name="Novo M.T.M."/>
            <person name="Okura V.K."/>
            <person name="Oliveira M.C."/>
            <person name="Oliveira V.R."/>
            <person name="Pereira H.A."/>
            <person name="Rossi A."/>
            <person name="Sena J.A.D."/>
            <person name="Silva C."/>
            <person name="de Souza R.F."/>
            <person name="Spinola L.A.F."/>
            <person name="Takita M.A."/>
            <person name="Tamura R.E."/>
            <person name="Teixeira E.C."/>
            <person name="Tezza R.I.D."/>
            <person name="Trindade dos Santos M."/>
            <person name="Truffi D."/>
            <person name="Tsai S.M."/>
            <person name="White F.F."/>
            <person name="Setubal J.C."/>
            <person name="Kitajima J.P."/>
        </authorList>
    </citation>
    <scope>NUCLEOTIDE SEQUENCE [LARGE SCALE GENOMIC DNA]</scope>
    <source>
        <strain>306</strain>
    </source>
</reference>
<proteinExistence type="inferred from homology"/>